<sequence length="94" mass="10997">MRIEVIRREENLLEFYLEGEDHTFANLLTETLHENEHVTFAGYTIEHPITMARKPRFKVVTDGKITPEKALEEAAQKIFDRAREVLEAWKAAIE</sequence>
<protein>
    <recommendedName>
        <fullName evidence="1">DNA-directed RNA polymerase subunit Rpo11</fullName>
        <ecNumber evidence="1">2.7.7.6</ecNumber>
    </recommendedName>
    <alternativeName>
        <fullName evidence="1">DNA-directed RNA polymerase subunit L</fullName>
    </alternativeName>
</protein>
<reference key="1">
    <citation type="journal article" date="2005" name="Genome Res.">
        <title>Complete genome sequence of the hyperthermophilic archaeon Thermococcus kodakaraensis KOD1 and comparison with Pyrococcus genomes.</title>
        <authorList>
            <person name="Fukui T."/>
            <person name="Atomi H."/>
            <person name="Kanai T."/>
            <person name="Matsumi R."/>
            <person name="Fujiwara S."/>
            <person name="Imanaka T."/>
        </authorList>
    </citation>
    <scope>NUCLEOTIDE SEQUENCE [LARGE SCALE GENOMIC DNA]</scope>
    <source>
        <strain>ATCC BAA-918 / JCM 12380 / KOD1</strain>
    </source>
</reference>
<feature type="chain" id="PRO_0000149337" description="DNA-directed RNA polymerase subunit Rpo11">
    <location>
        <begin position="1"/>
        <end position="94"/>
    </location>
</feature>
<feature type="strand" evidence="2">
    <location>
        <begin position="2"/>
        <end position="9"/>
    </location>
</feature>
<feature type="strand" evidence="2">
    <location>
        <begin position="12"/>
        <end position="18"/>
    </location>
</feature>
<feature type="helix" evidence="2">
    <location>
        <begin position="22"/>
        <end position="32"/>
    </location>
</feature>
<feature type="strand" evidence="2">
    <location>
        <begin position="38"/>
        <end position="47"/>
    </location>
</feature>
<feature type="turn" evidence="3">
    <location>
        <begin position="48"/>
        <end position="53"/>
    </location>
</feature>
<feature type="strand" evidence="2">
    <location>
        <begin position="54"/>
        <end position="61"/>
    </location>
</feature>
<feature type="strand" evidence="2">
    <location>
        <begin position="63"/>
        <end position="65"/>
    </location>
</feature>
<feature type="helix" evidence="2">
    <location>
        <begin position="67"/>
        <end position="93"/>
    </location>
</feature>
<keyword id="KW-0002">3D-structure</keyword>
<keyword id="KW-0963">Cytoplasm</keyword>
<keyword id="KW-0240">DNA-directed RNA polymerase</keyword>
<keyword id="KW-0548">Nucleotidyltransferase</keyword>
<keyword id="KW-1185">Reference proteome</keyword>
<keyword id="KW-0804">Transcription</keyword>
<keyword id="KW-0808">Transferase</keyword>
<dbReference type="EC" id="2.7.7.6" evidence="1"/>
<dbReference type="EMBL" id="AP006878">
    <property type="protein sequence ID" value="BAD85356.1"/>
    <property type="molecule type" value="Genomic_DNA"/>
</dbReference>
<dbReference type="RefSeq" id="WP_011250118.1">
    <property type="nucleotide sequence ID" value="NC_006624.1"/>
</dbReference>
<dbReference type="PDB" id="4QIW">
    <property type="method" value="X-ray"/>
    <property type="resolution" value="3.50 A"/>
    <property type="chains" value="L/U=1-94"/>
</dbReference>
<dbReference type="PDB" id="4QJV">
    <property type="method" value="X-ray"/>
    <property type="resolution" value="1.60 A"/>
    <property type="chains" value="B/D=1-94"/>
</dbReference>
<dbReference type="PDB" id="6KF3">
    <property type="method" value="EM"/>
    <property type="resolution" value="3.90 A"/>
    <property type="chains" value="L=1-94"/>
</dbReference>
<dbReference type="PDB" id="6KF4">
    <property type="method" value="EM"/>
    <property type="resolution" value="3.97 A"/>
    <property type="chains" value="L=1-94"/>
</dbReference>
<dbReference type="PDB" id="6KF9">
    <property type="method" value="EM"/>
    <property type="resolution" value="3.79 A"/>
    <property type="chains" value="L=1-94"/>
</dbReference>
<dbReference type="PDB" id="9BCT">
    <property type="method" value="EM"/>
    <property type="resolution" value="2.50 A"/>
    <property type="chains" value="L=1-94"/>
</dbReference>
<dbReference type="PDB" id="9BCU">
    <property type="method" value="EM"/>
    <property type="resolution" value="2.20 A"/>
    <property type="chains" value="L=1-94"/>
</dbReference>
<dbReference type="PDBsum" id="4QIW"/>
<dbReference type="PDBsum" id="4QJV"/>
<dbReference type="PDBsum" id="6KF3"/>
<dbReference type="PDBsum" id="6KF4"/>
<dbReference type="PDBsum" id="6KF9"/>
<dbReference type="PDBsum" id="9BCT"/>
<dbReference type="PDBsum" id="9BCU"/>
<dbReference type="EMDB" id="EMD-44438"/>
<dbReference type="EMDB" id="EMD-44439"/>
<dbReference type="SMR" id="Q5JE88"/>
<dbReference type="FunCoup" id="Q5JE88">
    <property type="interactions" value="11"/>
</dbReference>
<dbReference type="STRING" id="69014.TK1167"/>
<dbReference type="EnsemblBacteria" id="BAD85356">
    <property type="protein sequence ID" value="BAD85356"/>
    <property type="gene ID" value="TK1167"/>
</dbReference>
<dbReference type="GeneID" id="78447682"/>
<dbReference type="KEGG" id="tko:TK1167"/>
<dbReference type="PATRIC" id="fig|69014.16.peg.1142"/>
<dbReference type="eggNOG" id="arCOG04111">
    <property type="taxonomic scope" value="Archaea"/>
</dbReference>
<dbReference type="HOGENOM" id="CLU_090381_5_0_2"/>
<dbReference type="InParanoid" id="Q5JE88"/>
<dbReference type="OrthoDB" id="24205at2157"/>
<dbReference type="PhylomeDB" id="Q5JE88"/>
<dbReference type="EvolutionaryTrace" id="Q5JE88"/>
<dbReference type="Proteomes" id="UP000000536">
    <property type="component" value="Chromosome"/>
</dbReference>
<dbReference type="GO" id="GO:0005737">
    <property type="term" value="C:cytoplasm"/>
    <property type="evidence" value="ECO:0007669"/>
    <property type="project" value="UniProtKB-SubCell"/>
</dbReference>
<dbReference type="GO" id="GO:0000428">
    <property type="term" value="C:DNA-directed RNA polymerase complex"/>
    <property type="evidence" value="ECO:0007669"/>
    <property type="project" value="UniProtKB-KW"/>
</dbReference>
<dbReference type="GO" id="GO:0003677">
    <property type="term" value="F:DNA binding"/>
    <property type="evidence" value="ECO:0007669"/>
    <property type="project" value="InterPro"/>
</dbReference>
<dbReference type="GO" id="GO:0003899">
    <property type="term" value="F:DNA-directed RNA polymerase activity"/>
    <property type="evidence" value="ECO:0007669"/>
    <property type="project" value="UniProtKB-UniRule"/>
</dbReference>
<dbReference type="GO" id="GO:0046983">
    <property type="term" value="F:protein dimerization activity"/>
    <property type="evidence" value="ECO:0007669"/>
    <property type="project" value="InterPro"/>
</dbReference>
<dbReference type="GO" id="GO:0006351">
    <property type="term" value="P:DNA-templated transcription"/>
    <property type="evidence" value="ECO:0007669"/>
    <property type="project" value="UniProtKB-UniRule"/>
</dbReference>
<dbReference type="CDD" id="cd06927">
    <property type="entry name" value="RNAP_L"/>
    <property type="match status" value="1"/>
</dbReference>
<dbReference type="Gene3D" id="3.30.1360.10">
    <property type="entry name" value="RNA polymerase, RBP11-like subunit"/>
    <property type="match status" value="1"/>
</dbReference>
<dbReference type="HAMAP" id="MF_00261">
    <property type="entry name" value="RNApol_arch_Rpo11"/>
    <property type="match status" value="1"/>
</dbReference>
<dbReference type="InterPro" id="IPR036603">
    <property type="entry name" value="RBP11-like"/>
</dbReference>
<dbReference type="InterPro" id="IPR009025">
    <property type="entry name" value="RBP11-like_dimer"/>
</dbReference>
<dbReference type="InterPro" id="IPR008193">
    <property type="entry name" value="RNA_pol_Rpb11_13-16kDa_CS"/>
</dbReference>
<dbReference type="InterPro" id="IPR022905">
    <property type="entry name" value="Rpo11-like"/>
</dbReference>
<dbReference type="NCBIfam" id="NF002235">
    <property type="entry name" value="PRK01146.1-3"/>
    <property type="match status" value="1"/>
</dbReference>
<dbReference type="PANTHER" id="PTHR13946">
    <property type="entry name" value="DNA-DIRECTED RNA POLYMERASE I,II,III"/>
    <property type="match status" value="1"/>
</dbReference>
<dbReference type="PANTHER" id="PTHR13946:SF28">
    <property type="entry name" value="DNA-DIRECTED RNA POLYMERASES I AND III SUBUNIT RPAC2"/>
    <property type="match status" value="1"/>
</dbReference>
<dbReference type="Pfam" id="PF13656">
    <property type="entry name" value="RNA_pol_L_2"/>
    <property type="match status" value="1"/>
</dbReference>
<dbReference type="SUPFAM" id="SSF55257">
    <property type="entry name" value="RBP11-like subunits of RNA polymerase"/>
    <property type="match status" value="1"/>
</dbReference>
<dbReference type="PROSITE" id="PS01154">
    <property type="entry name" value="RNA_POL_L_13KD"/>
    <property type="match status" value="1"/>
</dbReference>
<comment type="function">
    <text evidence="1">DNA-dependent RNA polymerase (RNAP) catalyzes the transcription of DNA into RNA using the four ribonucleoside triphosphates as substrates.</text>
</comment>
<comment type="catalytic activity">
    <reaction evidence="1">
        <text>RNA(n) + a ribonucleoside 5'-triphosphate = RNA(n+1) + diphosphate</text>
        <dbReference type="Rhea" id="RHEA:21248"/>
        <dbReference type="Rhea" id="RHEA-COMP:14527"/>
        <dbReference type="Rhea" id="RHEA-COMP:17342"/>
        <dbReference type="ChEBI" id="CHEBI:33019"/>
        <dbReference type="ChEBI" id="CHEBI:61557"/>
        <dbReference type="ChEBI" id="CHEBI:140395"/>
        <dbReference type="EC" id="2.7.7.6"/>
    </reaction>
</comment>
<comment type="subunit">
    <text evidence="1">Part of the RNA polymerase complex.</text>
</comment>
<comment type="subcellular location">
    <subcellularLocation>
        <location evidence="1">Cytoplasm</location>
    </subcellularLocation>
</comment>
<comment type="similarity">
    <text evidence="1">Belongs to the archaeal Rpo11/eukaryotic RPB11/RPC19 RNA polymerase subunit family.</text>
</comment>
<evidence type="ECO:0000255" key="1">
    <source>
        <dbReference type="HAMAP-Rule" id="MF_00261"/>
    </source>
</evidence>
<evidence type="ECO:0007829" key="2">
    <source>
        <dbReference type="PDB" id="4QJV"/>
    </source>
</evidence>
<evidence type="ECO:0007829" key="3">
    <source>
        <dbReference type="PDB" id="9BCU"/>
    </source>
</evidence>
<name>RPO11_THEKO</name>
<accession>Q5JE88</accession>
<organism>
    <name type="scientific">Thermococcus kodakarensis (strain ATCC BAA-918 / JCM 12380 / KOD1)</name>
    <name type="common">Pyrococcus kodakaraensis (strain KOD1)</name>
    <dbReference type="NCBI Taxonomy" id="69014"/>
    <lineage>
        <taxon>Archaea</taxon>
        <taxon>Methanobacteriati</taxon>
        <taxon>Methanobacteriota</taxon>
        <taxon>Thermococci</taxon>
        <taxon>Thermococcales</taxon>
        <taxon>Thermococcaceae</taxon>
        <taxon>Thermococcus</taxon>
    </lineage>
</organism>
<proteinExistence type="evidence at protein level"/>
<gene>
    <name evidence="1" type="primary">rpo11</name>
    <name evidence="1" type="synonym">rpoL</name>
    <name type="ordered locus">TK1167</name>
</gene>